<keyword id="KW-0167">Capsid protein</keyword>
<keyword id="KW-1015">Disulfide bond</keyword>
<keyword id="KW-1048">Host nucleus</keyword>
<keyword id="KW-0945">Host-virus interaction</keyword>
<keyword id="KW-0426">Late protein</keyword>
<keyword id="KW-1145">T=7 icosahedral capsid protein</keyword>
<keyword id="KW-1161">Viral attachment to host cell</keyword>
<keyword id="KW-1162">Viral penetration into host cytoplasm</keyword>
<keyword id="KW-0946">Virion</keyword>
<keyword id="KW-1164">Virus endocytosis by host</keyword>
<keyword id="KW-1160">Virus entry into host cell</keyword>
<dbReference type="EMBL" id="X05817">
    <property type="status" value="NOT_ANNOTATED_CDS"/>
    <property type="molecule type" value="Genomic_DNA"/>
</dbReference>
<dbReference type="PIR" id="B26214">
    <property type="entry name" value="P1WLB4"/>
</dbReference>
<dbReference type="SMR" id="P08341"/>
<dbReference type="Proteomes" id="UP000007613">
    <property type="component" value="Segment"/>
</dbReference>
<dbReference type="GO" id="GO:0042025">
    <property type="term" value="C:host cell nucleus"/>
    <property type="evidence" value="ECO:0007669"/>
    <property type="project" value="UniProtKB-SubCell"/>
</dbReference>
<dbReference type="GO" id="GO:0039620">
    <property type="term" value="C:T=7 icosahedral viral capsid"/>
    <property type="evidence" value="ECO:0007669"/>
    <property type="project" value="UniProtKB-UniRule"/>
</dbReference>
<dbReference type="GO" id="GO:0005198">
    <property type="term" value="F:structural molecule activity"/>
    <property type="evidence" value="ECO:0007669"/>
    <property type="project" value="UniProtKB-UniRule"/>
</dbReference>
<dbReference type="GO" id="GO:0075509">
    <property type="term" value="P:endocytosis involved in viral entry into host cell"/>
    <property type="evidence" value="ECO:0007669"/>
    <property type="project" value="UniProtKB-KW"/>
</dbReference>
<dbReference type="GO" id="GO:0019062">
    <property type="term" value="P:virion attachment to host cell"/>
    <property type="evidence" value="ECO:0007669"/>
    <property type="project" value="UniProtKB-UniRule"/>
</dbReference>
<dbReference type="Gene3D" id="2.60.175.20">
    <property type="entry name" value="Major capsid L1 (late) superfamily, Papillomavirus"/>
    <property type="match status" value="2"/>
</dbReference>
<dbReference type="HAMAP" id="MF_04002">
    <property type="entry name" value="PPV_L1"/>
    <property type="match status" value="1"/>
</dbReference>
<dbReference type="InterPro" id="IPR002210">
    <property type="entry name" value="Capsid_L1_Papillomavir"/>
</dbReference>
<dbReference type="InterPro" id="IPR036973">
    <property type="entry name" value="Capsid_L1_sf_Papillomavir"/>
</dbReference>
<dbReference type="InterPro" id="IPR011222">
    <property type="entry name" value="dsDNA_vir_gr_I_capsid"/>
</dbReference>
<dbReference type="Pfam" id="PF00500">
    <property type="entry name" value="Late_protein_L1"/>
    <property type="match status" value="1"/>
</dbReference>
<dbReference type="PRINTS" id="PR00865">
    <property type="entry name" value="HPVCAPSIDL1"/>
</dbReference>
<dbReference type="SUPFAM" id="SSF88648">
    <property type="entry name" value="Group I dsDNA viruses"/>
    <property type="match status" value="1"/>
</dbReference>
<feature type="chain" id="PRO_0000133478" description="Major capsid protein L1">
    <location>
        <begin position="1"/>
        <end position="506"/>
    </location>
</feature>
<feature type="region of interest" description="Disordered" evidence="2">
    <location>
        <begin position="484"/>
        <end position="506"/>
    </location>
</feature>
<feature type="disulfide bond" description="Interchain (with C-431)" evidence="1">
    <location>
        <position position="173"/>
    </location>
</feature>
<feature type="disulfide bond" description="Interchain (with C-173)" evidence="1">
    <location>
        <position position="431"/>
    </location>
</feature>
<accession>P08341</accession>
<proteinExistence type="inferred from homology"/>
<organism>
    <name type="scientific">Bos taurus papillomavirus 4</name>
    <name type="common">Bovine papillomavirus 4</name>
    <dbReference type="NCBI Taxonomy" id="10562"/>
    <lineage>
        <taxon>Viruses</taxon>
        <taxon>Monodnaviria</taxon>
        <taxon>Shotokuvirae</taxon>
        <taxon>Cossaviricota</taxon>
        <taxon>Papovaviricetes</taxon>
        <taxon>Zurhausenvirales</taxon>
        <taxon>Papillomaviridae</taxon>
        <taxon>Firstpapillomavirinae</taxon>
        <taxon>Xipapillomavirus</taxon>
        <taxon>Xipapillomavirus 1</taxon>
    </lineage>
</organism>
<reference key="1">
    <citation type="journal article" date="1987" name="J. Gen. Virol.">
        <title>The nucleotide sequence and genome organization of bovine papillomavirus type 4.</title>
        <authorList>
            <person name="Patel K.R."/>
            <person name="Smith K.T."/>
            <person name="Campo M.S."/>
        </authorList>
    </citation>
    <scope>NUCLEOTIDE SEQUENCE [GENOMIC DNA]</scope>
</reference>
<sequence>MSFWVPNSAKLYLPPPTPVTQFLDTDEFVTRTDIFYHTSTDRLLFVGHPYFRPKKRRHRCCSQMSGSQFRVFRLKFPDPNKFSFPTQDIYNPEKQRLVWAVRGIEICRGQPLGVGVTGHPSFNKFKDAENLNQNSDQKEDDRVNVCMDPKQVQLFIVGCVPCDGEHWDKAQACEPQGPGDCPPIELKNTKIQDGEMCDTGFGNMNFAALQASKSGAPLDIVDQIVKYPDFLKMGNDPYGNSMFFYAKREQMYVRHLWARAGRVGDDIPTGESGSPYFLPATGRGPLPSSVYIGSPSGSLVSSDQQIYNRPFWIQRAQGSNNGMCWNNELFVTAVDSTRGTNFSISVHTTDPEVKPQETYTATKFKHYLRHVEEWDLSLIMQLCIVNLTPESIAYLHNMNESIIENWNLGFIQPPNDIEDHYRFITSLATRCPKKTDTQVKEDPYKDLKFWDVDLTEKFTTNLNQHSLVRKFLFQIGRKATKRSAPKTVTFENTEGKKAPKRRRKNV</sequence>
<comment type="function">
    <text evidence="1">Forms an icosahedral capsid with a T=7 symmetry and a 50 nm diameter. The capsid is composed of 72 pentamers linked to each other by disulfide bonds and associated with L2 proteins. Binds to heparan sulfate proteoglycans on cell surface of basal layer keratinocytes to provide initial virion attachment. This binding mediates a conformational change in the virus capsid that facilitates efficient infection. The virion enters the host cell via endocytosis. During virus trafficking, L1 protein dissociates from the viral DNA and the genomic DNA is released to the host nucleus. The virion assembly takes place within the cell nucleus. Encapsulates the genomic DNA together with protein L2.</text>
</comment>
<comment type="subunit">
    <text evidence="1">Self-assembles into homopentamers. The capsid has an icosahedral symmetry and consists of 72 capsomers, with each capsomer being a pentamer of L1. Interacts with the minor capsid protein L2; this interaction is necessary for viral genome encapsidation. Interacts with protein E2; this interaction enhances E2-dependent replication and transcription activation.</text>
</comment>
<comment type="subcellular location">
    <subcellularLocation>
        <location evidence="1">Virion</location>
    </subcellularLocation>
    <subcellularLocation>
        <location evidence="1">Host nucleus</location>
    </subcellularLocation>
</comment>
<comment type="similarity">
    <text evidence="1">Belongs to the papillomaviridae L1 protein family.</text>
</comment>
<organismHost>
    <name type="scientific">Bos taurus</name>
    <name type="common">Bovine</name>
    <dbReference type="NCBI Taxonomy" id="9913"/>
</organismHost>
<evidence type="ECO:0000255" key="1">
    <source>
        <dbReference type="HAMAP-Rule" id="MF_04002"/>
    </source>
</evidence>
<evidence type="ECO:0000256" key="2">
    <source>
        <dbReference type="SAM" id="MobiDB-lite"/>
    </source>
</evidence>
<gene>
    <name evidence="1" type="primary">L1</name>
</gene>
<name>VL1_BPV4</name>
<protein>
    <recommendedName>
        <fullName evidence="1">Major capsid protein L1</fullName>
    </recommendedName>
</protein>